<comment type="function">
    <text evidence="1">Catalyzes the interconversion of 2-phosphoglycerate and 3-phosphoglycerate.</text>
</comment>
<comment type="catalytic activity">
    <reaction evidence="1">
        <text>(2R)-2-phosphoglycerate = (2R)-3-phosphoglycerate</text>
        <dbReference type="Rhea" id="RHEA:15901"/>
        <dbReference type="ChEBI" id="CHEBI:58272"/>
        <dbReference type="ChEBI" id="CHEBI:58289"/>
        <dbReference type="EC" id="5.4.2.11"/>
    </reaction>
</comment>
<comment type="pathway">
    <text evidence="1">Carbohydrate degradation; glycolysis; pyruvate from D-glyceraldehyde 3-phosphate: step 3/5.</text>
</comment>
<comment type="subunit">
    <text evidence="1">Homodimer.</text>
</comment>
<comment type="similarity">
    <text evidence="1">Belongs to the phosphoglycerate mutase family. BPG-dependent PGAM subfamily.</text>
</comment>
<evidence type="ECO:0000255" key="1">
    <source>
        <dbReference type="HAMAP-Rule" id="MF_01039"/>
    </source>
</evidence>
<sequence length="247" mass="27648">MHKLVLIRHGESTWNLENRFTGWTDVDLTPTGIEQAKNAGRLLKAEGYEFDLAYTSVLKRATRTLWHCLDEMDRTWLPVEHSWRLNERHYGALQGLNKADMAKQYGDAQVLVWRRSYDTPPPALETTDPRSERGDLRYAGLQAGEVPLTECLKDTVARVLPYWNESIAPAIRSGKRVLIAAHGNSIRALVKYLDNISDQDIVGLNIPNGIPLVYELDADLKPLRHYYLGDAEAAAKAAAAVASQGKA</sequence>
<proteinExistence type="inferred from homology"/>
<dbReference type="EC" id="5.4.2.11" evidence="1"/>
<dbReference type="EMBL" id="CP001392">
    <property type="protein sequence ID" value="ACM34262.1"/>
    <property type="molecule type" value="Genomic_DNA"/>
</dbReference>
<dbReference type="RefSeq" id="WP_015914139.1">
    <property type="nucleotide sequence ID" value="NC_011992.1"/>
</dbReference>
<dbReference type="SMR" id="B9MEZ2"/>
<dbReference type="KEGG" id="dia:Dtpsy_2828"/>
<dbReference type="eggNOG" id="COG0588">
    <property type="taxonomic scope" value="Bacteria"/>
</dbReference>
<dbReference type="HOGENOM" id="CLU_033323_1_1_4"/>
<dbReference type="UniPathway" id="UPA00109">
    <property type="reaction ID" value="UER00186"/>
</dbReference>
<dbReference type="Proteomes" id="UP000000450">
    <property type="component" value="Chromosome"/>
</dbReference>
<dbReference type="GO" id="GO:0004619">
    <property type="term" value="F:phosphoglycerate mutase activity"/>
    <property type="evidence" value="ECO:0007669"/>
    <property type="project" value="UniProtKB-EC"/>
</dbReference>
<dbReference type="GO" id="GO:0006094">
    <property type="term" value="P:gluconeogenesis"/>
    <property type="evidence" value="ECO:0007669"/>
    <property type="project" value="UniProtKB-UniRule"/>
</dbReference>
<dbReference type="GO" id="GO:0006096">
    <property type="term" value="P:glycolytic process"/>
    <property type="evidence" value="ECO:0007669"/>
    <property type="project" value="UniProtKB-UniRule"/>
</dbReference>
<dbReference type="CDD" id="cd07067">
    <property type="entry name" value="HP_PGM_like"/>
    <property type="match status" value="1"/>
</dbReference>
<dbReference type="FunFam" id="3.40.50.1240:FF:000003">
    <property type="entry name" value="2,3-bisphosphoglycerate-dependent phosphoglycerate mutase"/>
    <property type="match status" value="1"/>
</dbReference>
<dbReference type="Gene3D" id="3.40.50.1240">
    <property type="entry name" value="Phosphoglycerate mutase-like"/>
    <property type="match status" value="1"/>
</dbReference>
<dbReference type="HAMAP" id="MF_01039">
    <property type="entry name" value="PGAM_GpmA"/>
    <property type="match status" value="1"/>
</dbReference>
<dbReference type="InterPro" id="IPR013078">
    <property type="entry name" value="His_Pase_superF_clade-1"/>
</dbReference>
<dbReference type="InterPro" id="IPR029033">
    <property type="entry name" value="His_PPase_superfam"/>
</dbReference>
<dbReference type="InterPro" id="IPR001345">
    <property type="entry name" value="PG/BPGM_mutase_AS"/>
</dbReference>
<dbReference type="InterPro" id="IPR005952">
    <property type="entry name" value="Phosphogly_mut1"/>
</dbReference>
<dbReference type="NCBIfam" id="TIGR01258">
    <property type="entry name" value="pgm_1"/>
    <property type="match status" value="1"/>
</dbReference>
<dbReference type="NCBIfam" id="NF010713">
    <property type="entry name" value="PRK14115.1"/>
    <property type="match status" value="1"/>
</dbReference>
<dbReference type="PANTHER" id="PTHR11931">
    <property type="entry name" value="PHOSPHOGLYCERATE MUTASE"/>
    <property type="match status" value="1"/>
</dbReference>
<dbReference type="Pfam" id="PF00300">
    <property type="entry name" value="His_Phos_1"/>
    <property type="match status" value="1"/>
</dbReference>
<dbReference type="PIRSF" id="PIRSF000709">
    <property type="entry name" value="6PFK_2-Ptase"/>
    <property type="match status" value="1"/>
</dbReference>
<dbReference type="SMART" id="SM00855">
    <property type="entry name" value="PGAM"/>
    <property type="match status" value="1"/>
</dbReference>
<dbReference type="SUPFAM" id="SSF53254">
    <property type="entry name" value="Phosphoglycerate mutase-like"/>
    <property type="match status" value="1"/>
</dbReference>
<dbReference type="PROSITE" id="PS00175">
    <property type="entry name" value="PG_MUTASE"/>
    <property type="match status" value="1"/>
</dbReference>
<feature type="chain" id="PRO_1000149510" description="2,3-bisphosphoglycerate-dependent phosphoglycerate mutase">
    <location>
        <begin position="1"/>
        <end position="247"/>
    </location>
</feature>
<feature type="active site" description="Tele-phosphohistidine intermediate" evidence="1">
    <location>
        <position position="9"/>
    </location>
</feature>
<feature type="active site" description="Proton donor/acceptor" evidence="1">
    <location>
        <position position="87"/>
    </location>
</feature>
<feature type="binding site" evidence="1">
    <location>
        <begin position="8"/>
        <end position="15"/>
    </location>
    <ligand>
        <name>substrate</name>
    </ligand>
</feature>
<feature type="binding site" evidence="1">
    <location>
        <begin position="21"/>
        <end position="22"/>
    </location>
    <ligand>
        <name>substrate</name>
    </ligand>
</feature>
<feature type="binding site" evidence="1">
    <location>
        <position position="60"/>
    </location>
    <ligand>
        <name>substrate</name>
    </ligand>
</feature>
<feature type="binding site" evidence="1">
    <location>
        <begin position="87"/>
        <end position="90"/>
    </location>
    <ligand>
        <name>substrate</name>
    </ligand>
</feature>
<feature type="binding site" evidence="1">
    <location>
        <position position="98"/>
    </location>
    <ligand>
        <name>substrate</name>
    </ligand>
</feature>
<feature type="binding site" evidence="1">
    <location>
        <begin position="114"/>
        <end position="115"/>
    </location>
    <ligand>
        <name>substrate</name>
    </ligand>
</feature>
<feature type="binding site" evidence="1">
    <location>
        <begin position="183"/>
        <end position="184"/>
    </location>
    <ligand>
        <name>substrate</name>
    </ligand>
</feature>
<feature type="site" description="Transition state stabilizer" evidence="1">
    <location>
        <position position="182"/>
    </location>
</feature>
<organism>
    <name type="scientific">Acidovorax ebreus (strain TPSY)</name>
    <name type="common">Diaphorobacter sp. (strain TPSY)</name>
    <dbReference type="NCBI Taxonomy" id="535289"/>
    <lineage>
        <taxon>Bacteria</taxon>
        <taxon>Pseudomonadati</taxon>
        <taxon>Pseudomonadota</taxon>
        <taxon>Betaproteobacteria</taxon>
        <taxon>Burkholderiales</taxon>
        <taxon>Comamonadaceae</taxon>
        <taxon>Diaphorobacter</taxon>
    </lineage>
</organism>
<accession>B9MEZ2</accession>
<reference key="1">
    <citation type="submission" date="2009-01" db="EMBL/GenBank/DDBJ databases">
        <title>Complete sequence of Diaphorobacter sp. TPSY.</title>
        <authorList>
            <consortium name="US DOE Joint Genome Institute"/>
            <person name="Lucas S."/>
            <person name="Copeland A."/>
            <person name="Lapidus A."/>
            <person name="Glavina del Rio T."/>
            <person name="Tice H."/>
            <person name="Bruce D."/>
            <person name="Goodwin L."/>
            <person name="Pitluck S."/>
            <person name="Chertkov O."/>
            <person name="Brettin T."/>
            <person name="Detter J.C."/>
            <person name="Han C."/>
            <person name="Larimer F."/>
            <person name="Land M."/>
            <person name="Hauser L."/>
            <person name="Kyrpides N."/>
            <person name="Mikhailova N."/>
            <person name="Coates J.D."/>
        </authorList>
    </citation>
    <scope>NUCLEOTIDE SEQUENCE [LARGE SCALE GENOMIC DNA]</scope>
    <source>
        <strain>TPSY</strain>
    </source>
</reference>
<gene>
    <name evidence="1" type="primary">gpmA</name>
    <name type="ordered locus">Dtpsy_2828</name>
</gene>
<protein>
    <recommendedName>
        <fullName evidence="1">2,3-bisphosphoglycerate-dependent phosphoglycerate mutase</fullName>
        <shortName evidence="1">BPG-dependent PGAM</shortName>
        <shortName evidence="1">PGAM</shortName>
        <shortName evidence="1">Phosphoglyceromutase</shortName>
        <shortName evidence="1">dPGM</shortName>
        <ecNumber evidence="1">5.4.2.11</ecNumber>
    </recommendedName>
</protein>
<name>GPMA_ACIET</name>
<keyword id="KW-0312">Gluconeogenesis</keyword>
<keyword id="KW-0324">Glycolysis</keyword>
<keyword id="KW-0413">Isomerase</keyword>
<keyword id="KW-1185">Reference proteome</keyword>